<dbReference type="EMBL" id="AY446894">
    <property type="protein sequence ID" value="AAR31609.1"/>
    <property type="molecule type" value="Genomic_DNA"/>
</dbReference>
<dbReference type="RefSeq" id="YP_081503.1">
    <property type="nucleotide sequence ID" value="NC_006273.2"/>
</dbReference>
<dbReference type="SMR" id="Q6SW87"/>
<dbReference type="BioGRID" id="1677997">
    <property type="interactions" value="3"/>
</dbReference>
<dbReference type="DNASU" id="3077444"/>
<dbReference type="GeneID" id="3077444"/>
<dbReference type="KEGG" id="vg:3077444"/>
<dbReference type="Reactome" id="R-HSA-9609690">
    <property type="pathway name" value="HCMV Early Events"/>
</dbReference>
<dbReference type="Reactome" id="R-HSA-9610379">
    <property type="pathway name" value="HCMV Late Events"/>
</dbReference>
<dbReference type="Proteomes" id="UP000000938">
    <property type="component" value="Segment"/>
</dbReference>
<dbReference type="GO" id="GO:0030430">
    <property type="term" value="C:host cell cytoplasm"/>
    <property type="evidence" value="ECO:0007669"/>
    <property type="project" value="UniProtKB-SubCell"/>
</dbReference>
<dbReference type="GO" id="GO:0019033">
    <property type="term" value="C:viral tegument"/>
    <property type="evidence" value="ECO:0000304"/>
    <property type="project" value="Reactome"/>
</dbReference>
<dbReference type="GO" id="GO:0005524">
    <property type="term" value="F:ATP binding"/>
    <property type="evidence" value="ECO:0007669"/>
    <property type="project" value="TreeGrafter"/>
</dbReference>
<dbReference type="GO" id="GO:0004748">
    <property type="term" value="F:ribonucleoside-diphosphate reductase activity, thioredoxin disulfide as acceptor"/>
    <property type="evidence" value="ECO:0007669"/>
    <property type="project" value="TreeGrafter"/>
</dbReference>
<dbReference type="GO" id="GO:0009263">
    <property type="term" value="P:deoxyribonucleotide biosynthetic process"/>
    <property type="evidence" value="ECO:0007669"/>
    <property type="project" value="TreeGrafter"/>
</dbReference>
<dbReference type="Gene3D" id="3.20.70.20">
    <property type="match status" value="1"/>
</dbReference>
<dbReference type="HAMAP" id="MF_04027">
    <property type="entry name" value="HSV_RIR1_betahv"/>
    <property type="match status" value="1"/>
</dbReference>
<dbReference type="InterPro" id="IPR034716">
    <property type="entry name" value="HSV_RIR1_betahv"/>
</dbReference>
<dbReference type="InterPro" id="IPR013346">
    <property type="entry name" value="NrdE_NrdA_C"/>
</dbReference>
<dbReference type="InterPro" id="IPR000788">
    <property type="entry name" value="RNR_lg_C"/>
</dbReference>
<dbReference type="InterPro" id="IPR039718">
    <property type="entry name" value="Rrm1"/>
</dbReference>
<dbReference type="PANTHER" id="PTHR11573">
    <property type="entry name" value="RIBONUCLEOSIDE-DIPHOSPHATE REDUCTASE LARGE CHAIN"/>
    <property type="match status" value="1"/>
</dbReference>
<dbReference type="PANTHER" id="PTHR11573:SF6">
    <property type="entry name" value="RIBONUCLEOSIDE-DIPHOSPHATE REDUCTASE LARGE SUBUNIT"/>
    <property type="match status" value="1"/>
</dbReference>
<dbReference type="Pfam" id="PF02867">
    <property type="entry name" value="Ribonuc_red_lgC"/>
    <property type="match status" value="1"/>
</dbReference>
<dbReference type="PRINTS" id="PR01183">
    <property type="entry name" value="RIBORDTASEM1"/>
</dbReference>
<dbReference type="SUPFAM" id="SSF51998">
    <property type="entry name" value="PFL-like glycyl radical enzymes"/>
    <property type="match status" value="1"/>
</dbReference>
<dbReference type="PROSITE" id="PS00089">
    <property type="entry name" value="RIBORED_LARGE"/>
    <property type="match status" value="1"/>
</dbReference>
<organismHost>
    <name type="scientific">Homo sapiens</name>
    <name type="common">Human</name>
    <dbReference type="NCBI Taxonomy" id="9606"/>
</organismHost>
<sequence>MNPADADEEQRVSSVPAHRCRPGRIPSRSAETETEESSAEVAADTIGGDDSELEEGPLPGGDKEASAGNTNVSSGVACVAGFTSGGGVVSWRPESPSPDGTPSVLSLTRDSGPAVPSRGGRVSSGLSTFNPAGATRMELDSVEEEDDFGASLCKVSPPIQAMRMLMGKKCHCHGYWGKFRFCGVQEPARELPSDRNALWREMDTVSRHSAGLGSFRLFQLIMRHGPCLIRHSPRCDLLLGRFYFKANWARESRTPLCYASELCDESVRRFVLRHMEDLPKLAEETARFVELAGCWGLYAAILCLDKVCRQLHGQDESPGGVFLRIAVALTAAIENSRHSRIYRFHLDARFEGEVLESVLKRCRDGQLSLSTFTMSTVGFDRVPQYDFLISADPFSRDASWAAMCKWMSTLSCGVSVSVNVTRLNADVNSVIRCLGGYCDLIREKEVHRPVVRVFVDMWDVAAIRVINFILKESTSELTGVCYAFNVPSVLMKRYRAREQRYSLFGRPVSRRLSDLGQESAFEKEYSRCEQSCPKVVVNTDDFLKKMLLCALKGRASVVFVHHVVKYSIMADSVCLPPCLSPDMASCHFGECDMPVQRLTVNVARCVFARSDEQKLHLPDVVLGNTRRYFDLSVLRELVTEAVVWGNARLDALMSASEWWVESALEKLRPLHIGVAGLHTALMRLGFTYFASWDLIERIFEHMYFAAVRASVDLCKSGLPRCEWFERTIYQEGKFIFELYRLPRLSIASARWEALRADMLEFGLRNCQFLAVGPDDEVAHLWGVTPSVWASRGTVFEEETVWSLCPPNRECYFPTVVRRPLRVPVVNYAWLEQHQEEGKATQCLFQAAPAIQNDVEMAAVNLSVFVDQCVALVFYYDSGMTPDVLLARMLKWYHWRFKVGVYKYCAS</sequence>
<proteinExistence type="inferred from homology"/>
<gene>
    <name evidence="1" type="primary">RIR1</name>
    <name type="synonym">UL45</name>
</gene>
<feature type="chain" id="PRO_0000418312" description="Ribonucleoside-diphosphate reductase large subunit-like protein">
    <location>
        <begin position="1"/>
        <end position="906"/>
    </location>
</feature>
<feature type="region of interest" description="Disordered" evidence="2">
    <location>
        <begin position="1"/>
        <end position="70"/>
    </location>
</feature>
<feature type="region of interest" description="Disordered" evidence="2">
    <location>
        <begin position="89"/>
        <end position="129"/>
    </location>
</feature>
<feature type="compositionally biased region" description="Polar residues" evidence="2">
    <location>
        <begin position="98"/>
        <end position="109"/>
    </location>
</feature>
<reference key="1">
    <citation type="journal article" date="2004" name="J. Gen. Virol.">
        <title>Genetic content of wild-type human cytomegalovirus.</title>
        <authorList>
            <person name="Dolan A."/>
            <person name="Cunningham C."/>
            <person name="Hector R.D."/>
            <person name="Hassan-Walker A.F."/>
            <person name="Lee L."/>
            <person name="Addison C."/>
            <person name="Dargan D.J."/>
            <person name="McGeoch D.J."/>
            <person name="Gatherer D."/>
            <person name="Emery V.C."/>
            <person name="Griffiths P.D."/>
            <person name="Sinzger C."/>
            <person name="McSharry B.P."/>
            <person name="Wilkinson G.W.G."/>
            <person name="Davison A.J."/>
        </authorList>
    </citation>
    <scope>NUCLEOTIDE SEQUENCE [LARGE SCALE GENOMIC DNA]</scope>
</reference>
<evidence type="ECO:0000255" key="1">
    <source>
        <dbReference type="HAMAP-Rule" id="MF_04027"/>
    </source>
</evidence>
<evidence type="ECO:0000256" key="2">
    <source>
        <dbReference type="SAM" id="MobiDB-lite"/>
    </source>
</evidence>
<keyword id="KW-1035">Host cytoplasm</keyword>
<keyword id="KW-0426">Late protein</keyword>
<keyword id="KW-1185">Reference proteome</keyword>
<keyword id="KW-0946">Virion</keyword>
<protein>
    <recommendedName>
        <fullName evidence="1">Ribonucleoside-diphosphate reductase large subunit-like protein</fullName>
    </recommendedName>
</protein>
<comment type="function">
    <text evidence="1">Does not possess a ribonucleotide reductase activity. Betaherpesviruses probably use another strategy to expand the dNTP pool in a quiescent host cell.</text>
</comment>
<comment type="subcellular location">
    <subcellularLocation>
        <location evidence="1">Virion</location>
    </subcellularLocation>
    <subcellularLocation>
        <location evidence="1">Host cytoplasm</location>
    </subcellularLocation>
</comment>
<comment type="similarity">
    <text evidence="1">Belongs to the ribonucleoside diphosphate reductase large chain family.</text>
</comment>
<comment type="caution">
    <text evidence="1">Lacks the conserved sequence Asn-x-Cys-x-Glu essential for ribonucleotide reductase activity.</text>
</comment>
<accession>Q6SW87</accession>
<accession>D2K3L2</accession>
<name>RIR1_HCMVM</name>
<organism>
    <name type="scientific">Human cytomegalovirus (strain Merlin)</name>
    <name type="common">HHV-5</name>
    <name type="synonym">Human herpesvirus 5</name>
    <dbReference type="NCBI Taxonomy" id="295027"/>
    <lineage>
        <taxon>Viruses</taxon>
        <taxon>Duplodnaviria</taxon>
        <taxon>Heunggongvirae</taxon>
        <taxon>Peploviricota</taxon>
        <taxon>Herviviricetes</taxon>
        <taxon>Herpesvirales</taxon>
        <taxon>Orthoherpesviridae</taxon>
        <taxon>Betaherpesvirinae</taxon>
        <taxon>Cytomegalovirus</taxon>
        <taxon>Cytomegalovirus humanbeta5</taxon>
        <taxon>Human cytomegalovirus</taxon>
    </lineage>
</organism>